<evidence type="ECO:0000255" key="1">
    <source>
        <dbReference type="HAMAP-Rule" id="MF_01521"/>
    </source>
</evidence>
<protein>
    <recommendedName>
        <fullName evidence="1">Putative manganese efflux pump MntP</fullName>
    </recommendedName>
</protein>
<comment type="function">
    <text evidence="1">Probably functions as a manganese efflux pump.</text>
</comment>
<comment type="subcellular location">
    <subcellularLocation>
        <location evidence="1">Cell inner membrane</location>
        <topology evidence="1">Multi-pass membrane protein</topology>
    </subcellularLocation>
</comment>
<comment type="similarity">
    <text evidence="1">Belongs to the MntP (TC 9.B.29) family.</text>
</comment>
<feature type="chain" id="PRO_0000296913" description="Putative manganese efflux pump MntP">
    <location>
        <begin position="1"/>
        <end position="186"/>
    </location>
</feature>
<feature type="transmembrane region" description="Helical" evidence="1">
    <location>
        <begin position="3"/>
        <end position="23"/>
    </location>
</feature>
<feature type="transmembrane region" description="Helical" evidence="1">
    <location>
        <begin position="39"/>
        <end position="59"/>
    </location>
</feature>
<feature type="transmembrane region" description="Helical" evidence="1">
    <location>
        <begin position="65"/>
        <end position="85"/>
    </location>
</feature>
<feature type="transmembrane region" description="Helical" evidence="1">
    <location>
        <begin position="109"/>
        <end position="129"/>
    </location>
</feature>
<feature type="transmembrane region" description="Helical" evidence="1">
    <location>
        <begin position="133"/>
        <end position="153"/>
    </location>
</feature>
<feature type="transmembrane region" description="Helical" evidence="1">
    <location>
        <begin position="166"/>
        <end position="186"/>
    </location>
</feature>
<reference key="1">
    <citation type="journal article" date="2006" name="Nat. Biotechnol.">
        <title>Genome sequence of the ubiquitous hydrocarbon-degrading marine bacterium Alcanivorax borkumensis.</title>
        <authorList>
            <person name="Schneiker S."/>
            <person name="Martins dos Santos V.A.P."/>
            <person name="Bartels D."/>
            <person name="Bekel T."/>
            <person name="Brecht M."/>
            <person name="Buhrmester J."/>
            <person name="Chernikova T.N."/>
            <person name="Denaro R."/>
            <person name="Ferrer M."/>
            <person name="Gertler C."/>
            <person name="Goesmann A."/>
            <person name="Golyshina O.V."/>
            <person name="Kaminski F."/>
            <person name="Khachane A.N."/>
            <person name="Lang S."/>
            <person name="Linke B."/>
            <person name="McHardy A.C."/>
            <person name="Meyer F."/>
            <person name="Nechitaylo T."/>
            <person name="Puehler A."/>
            <person name="Regenhardt D."/>
            <person name="Rupp O."/>
            <person name="Sabirova J.S."/>
            <person name="Selbitschka W."/>
            <person name="Yakimov M.M."/>
            <person name="Timmis K.N."/>
            <person name="Vorhoelter F.-J."/>
            <person name="Weidner S."/>
            <person name="Kaiser O."/>
            <person name="Golyshin P.N."/>
        </authorList>
    </citation>
    <scope>NUCLEOTIDE SEQUENCE [LARGE SCALE GENOMIC DNA]</scope>
    <source>
        <strain>ATCC 700651 / DSM 11573 / NCIMB 13689 / SK2</strain>
    </source>
</reference>
<proteinExistence type="inferred from homology"/>
<sequence length="186" mass="19719">MNPIALLLLAFAMSTDAFAAAIGKGAILKKPRLTEAFRIGIIFGSIEAITPLVGWLIGKSAASYVEAWDHWIAFSLLTVLGLHMIYEGTRPDGGSEEHKAQKMSLLRTCLTAFSTSIDAMAVGVSLAFINVNIWIASALIGLATTLMVTIGIMLGRAIGSVMGHRAEIFGGLTLIAVGAWILYGQL</sequence>
<gene>
    <name evidence="1" type="primary">mntP</name>
    <name type="ordered locus">ABO_2478</name>
</gene>
<name>MNTP_ALCBS</name>
<accession>Q0VLM2</accession>
<keyword id="KW-0997">Cell inner membrane</keyword>
<keyword id="KW-1003">Cell membrane</keyword>
<keyword id="KW-0406">Ion transport</keyword>
<keyword id="KW-0464">Manganese</keyword>
<keyword id="KW-0472">Membrane</keyword>
<keyword id="KW-1185">Reference proteome</keyword>
<keyword id="KW-0812">Transmembrane</keyword>
<keyword id="KW-1133">Transmembrane helix</keyword>
<keyword id="KW-0813">Transport</keyword>
<dbReference type="EMBL" id="AM286690">
    <property type="protein sequence ID" value="CAL17926.1"/>
    <property type="molecule type" value="Genomic_DNA"/>
</dbReference>
<dbReference type="RefSeq" id="WP_011589750.1">
    <property type="nucleotide sequence ID" value="NC_008260.1"/>
</dbReference>
<dbReference type="KEGG" id="abo:ABO_2478"/>
<dbReference type="eggNOG" id="COG1971">
    <property type="taxonomic scope" value="Bacteria"/>
</dbReference>
<dbReference type="HOGENOM" id="CLU_096410_0_0_6"/>
<dbReference type="OrthoDB" id="9811590at2"/>
<dbReference type="Proteomes" id="UP000008871">
    <property type="component" value="Chromosome"/>
</dbReference>
<dbReference type="GO" id="GO:0005886">
    <property type="term" value="C:plasma membrane"/>
    <property type="evidence" value="ECO:0007669"/>
    <property type="project" value="UniProtKB-SubCell"/>
</dbReference>
<dbReference type="GO" id="GO:0005384">
    <property type="term" value="F:manganese ion transmembrane transporter activity"/>
    <property type="evidence" value="ECO:0007669"/>
    <property type="project" value="UniProtKB-UniRule"/>
</dbReference>
<dbReference type="HAMAP" id="MF_01521">
    <property type="entry name" value="MntP_pump"/>
    <property type="match status" value="1"/>
</dbReference>
<dbReference type="InterPro" id="IPR003810">
    <property type="entry name" value="Mntp/YtaF"/>
</dbReference>
<dbReference type="InterPro" id="IPR022929">
    <property type="entry name" value="Put_MntP"/>
</dbReference>
<dbReference type="PANTHER" id="PTHR35529">
    <property type="entry name" value="MANGANESE EFFLUX PUMP MNTP-RELATED"/>
    <property type="match status" value="1"/>
</dbReference>
<dbReference type="PANTHER" id="PTHR35529:SF1">
    <property type="entry name" value="MANGANESE EFFLUX PUMP MNTP-RELATED"/>
    <property type="match status" value="1"/>
</dbReference>
<dbReference type="Pfam" id="PF02659">
    <property type="entry name" value="Mntp"/>
    <property type="match status" value="1"/>
</dbReference>
<organism>
    <name type="scientific">Alcanivorax borkumensis (strain ATCC 700651 / DSM 11573 / NCIMB 13689 / SK2)</name>
    <dbReference type="NCBI Taxonomy" id="393595"/>
    <lineage>
        <taxon>Bacteria</taxon>
        <taxon>Pseudomonadati</taxon>
        <taxon>Pseudomonadota</taxon>
        <taxon>Gammaproteobacteria</taxon>
        <taxon>Oceanospirillales</taxon>
        <taxon>Alcanivoracaceae</taxon>
        <taxon>Alcanivorax</taxon>
    </lineage>
</organism>